<organism>
    <name type="scientific">Streptococcus agalactiae serotype V (strain ATCC BAA-611 / 2603 V/R)</name>
    <dbReference type="NCBI Taxonomy" id="208435"/>
    <lineage>
        <taxon>Bacteria</taxon>
        <taxon>Bacillati</taxon>
        <taxon>Bacillota</taxon>
        <taxon>Bacilli</taxon>
        <taxon>Lactobacillales</taxon>
        <taxon>Streptococcaceae</taxon>
        <taxon>Streptococcus</taxon>
    </lineage>
</organism>
<keyword id="KW-1185">Reference proteome</keyword>
<protein>
    <recommendedName>
        <fullName evidence="1">UPF0346 protein SAG1509</fullName>
    </recommendedName>
</protein>
<proteinExistence type="inferred from homology"/>
<sequence length="71" mass="8511">MRKSFYSWLMTQRNPKSNEPVAILADYAFDETTFPKHSSDFETVSRYLEDEASFSFNLTDFDDIWEDYLNH</sequence>
<accession>Q8DYH2</accession>
<comment type="similarity">
    <text evidence="1">Belongs to the UPF0346 family.</text>
</comment>
<gene>
    <name type="ordered locus">SAG1509</name>
</gene>
<evidence type="ECO:0000255" key="1">
    <source>
        <dbReference type="HAMAP-Rule" id="MF_01538"/>
    </source>
</evidence>
<dbReference type="EMBL" id="AE009948">
    <property type="protein sequence ID" value="AAN00376.1"/>
    <property type="molecule type" value="Genomic_DNA"/>
</dbReference>
<dbReference type="RefSeq" id="NP_688503.1">
    <property type="nucleotide sequence ID" value="NC_004116.1"/>
</dbReference>
<dbReference type="RefSeq" id="WP_001232073.1">
    <property type="nucleotide sequence ID" value="NC_004116.1"/>
</dbReference>
<dbReference type="SMR" id="Q8DYH2"/>
<dbReference type="STRING" id="208435.SAG1509"/>
<dbReference type="KEGG" id="sag:SAG1509"/>
<dbReference type="PATRIC" id="fig|208435.3.peg.1518"/>
<dbReference type="HOGENOM" id="CLU_177534_1_0_9"/>
<dbReference type="OrthoDB" id="2242851at2"/>
<dbReference type="Proteomes" id="UP000000821">
    <property type="component" value="Chromosome"/>
</dbReference>
<dbReference type="Gene3D" id="1.10.150.260">
    <property type="entry name" value="YozE SAM-like"/>
    <property type="match status" value="1"/>
</dbReference>
<dbReference type="HAMAP" id="MF_01538">
    <property type="entry name" value="UPF0346"/>
    <property type="match status" value="1"/>
</dbReference>
<dbReference type="InterPro" id="IPR010673">
    <property type="entry name" value="UPF0346"/>
</dbReference>
<dbReference type="InterPro" id="IPR023089">
    <property type="entry name" value="YozE_SAM-like"/>
</dbReference>
<dbReference type="InterPro" id="IPR036806">
    <property type="entry name" value="YozE_SAM-like_sf"/>
</dbReference>
<dbReference type="NCBIfam" id="NF010193">
    <property type="entry name" value="PRK13672.1"/>
    <property type="match status" value="1"/>
</dbReference>
<dbReference type="Pfam" id="PF06855">
    <property type="entry name" value="YozE_SAM_like"/>
    <property type="match status" value="1"/>
</dbReference>
<dbReference type="PIRSF" id="PIRSF037262">
    <property type="entry name" value="UCP037262"/>
    <property type="match status" value="1"/>
</dbReference>
<dbReference type="SUPFAM" id="SSF140652">
    <property type="entry name" value="YozE-like"/>
    <property type="match status" value="1"/>
</dbReference>
<reference key="1">
    <citation type="journal article" date="2002" name="Proc. Natl. Acad. Sci. U.S.A.">
        <title>Complete genome sequence and comparative genomic analysis of an emerging human pathogen, serotype V Streptococcus agalactiae.</title>
        <authorList>
            <person name="Tettelin H."/>
            <person name="Masignani V."/>
            <person name="Cieslewicz M.J."/>
            <person name="Eisen J.A."/>
            <person name="Peterson S.N."/>
            <person name="Wessels M.R."/>
            <person name="Paulsen I.T."/>
            <person name="Nelson K.E."/>
            <person name="Margarit I."/>
            <person name="Read T.D."/>
            <person name="Madoff L.C."/>
            <person name="Wolf A.M."/>
            <person name="Beanan M.J."/>
            <person name="Brinkac L.M."/>
            <person name="Daugherty S.C."/>
            <person name="DeBoy R.T."/>
            <person name="Durkin A.S."/>
            <person name="Kolonay J.F."/>
            <person name="Madupu R."/>
            <person name="Lewis M.R."/>
            <person name="Radune D."/>
            <person name="Fedorova N.B."/>
            <person name="Scanlan D."/>
            <person name="Khouri H.M."/>
            <person name="Mulligan S."/>
            <person name="Carty H.A."/>
            <person name="Cline R.T."/>
            <person name="Van Aken S.E."/>
            <person name="Gill J."/>
            <person name="Scarselli M."/>
            <person name="Mora M."/>
            <person name="Iacobini E.T."/>
            <person name="Brettoni C."/>
            <person name="Galli G."/>
            <person name="Mariani M."/>
            <person name="Vegni F."/>
            <person name="Maione D."/>
            <person name="Rinaudo D."/>
            <person name="Rappuoli R."/>
            <person name="Telford J.L."/>
            <person name="Kasper D.L."/>
            <person name="Grandi G."/>
            <person name="Fraser C.M."/>
        </authorList>
    </citation>
    <scope>NUCLEOTIDE SEQUENCE [LARGE SCALE GENOMIC DNA]</scope>
    <source>
        <strain>ATCC BAA-611 / 2603 V/R</strain>
    </source>
</reference>
<name>Y1509_STRA5</name>
<feature type="chain" id="PRO_0000164292" description="UPF0346 protein SAG1509">
    <location>
        <begin position="1"/>
        <end position="71"/>
    </location>
</feature>